<dbReference type="EMBL" id="AE017341">
    <property type="protein sequence ID" value="AAW41425.2"/>
    <property type="molecule type" value="Genomic_DNA"/>
</dbReference>
<dbReference type="RefSeq" id="XP_567244.1">
    <property type="nucleotide sequence ID" value="XM_567244.1"/>
</dbReference>
<dbReference type="STRING" id="214684.P0CQ38"/>
<dbReference type="PaxDb" id="214684-P0CQ38"/>
<dbReference type="EnsemblFungi" id="AAW41425">
    <property type="protein sequence ID" value="AAW41425"/>
    <property type="gene ID" value="CNA06860"/>
</dbReference>
<dbReference type="VEuPathDB" id="FungiDB:CNA06860"/>
<dbReference type="eggNOG" id="KOG1944">
    <property type="taxonomic scope" value="Eukaryota"/>
</dbReference>
<dbReference type="InParanoid" id="P0CQ38"/>
<dbReference type="OrthoDB" id="430207at2759"/>
<dbReference type="Proteomes" id="UP000002149">
    <property type="component" value="Chromosome 1"/>
</dbReference>
<dbReference type="GO" id="GO:0005737">
    <property type="term" value="C:cytoplasm"/>
    <property type="evidence" value="ECO:0000318"/>
    <property type="project" value="GO_Central"/>
</dbReference>
<dbReference type="GO" id="GO:0005743">
    <property type="term" value="C:mitochondrial inner membrane"/>
    <property type="evidence" value="ECO:0007669"/>
    <property type="project" value="UniProtKB-SubCell"/>
</dbReference>
<dbReference type="GO" id="GO:0005739">
    <property type="term" value="C:mitochondrion"/>
    <property type="evidence" value="ECO:0000318"/>
    <property type="project" value="GO_Central"/>
</dbReference>
<dbReference type="GO" id="GO:0006067">
    <property type="term" value="P:ethanol metabolic process"/>
    <property type="evidence" value="ECO:0007669"/>
    <property type="project" value="EnsemblFungi"/>
</dbReference>
<dbReference type="InterPro" id="IPR007248">
    <property type="entry name" value="Mpv17_PMP22"/>
</dbReference>
<dbReference type="PANTHER" id="PTHR11266">
    <property type="entry name" value="PEROXISOMAL MEMBRANE PROTEIN 2, PXMP2 MPV17"/>
    <property type="match status" value="1"/>
</dbReference>
<dbReference type="PANTHER" id="PTHR11266:SF17">
    <property type="entry name" value="PROTEIN MPV17"/>
    <property type="match status" value="1"/>
</dbReference>
<dbReference type="Pfam" id="PF04117">
    <property type="entry name" value="Mpv17_PMP22"/>
    <property type="match status" value="1"/>
</dbReference>
<proteinExistence type="inferred from homology"/>
<protein>
    <recommendedName>
        <fullName>Protein SYM1</fullName>
    </recommendedName>
</protein>
<sequence length="190" mass="21318">MAGLMGKYAAFLTRRPVLGNMISSAVLFGTGDVIAQQLIEKKGADHDLPRTARIVTWGGILFAPTVNLWFRTLERIPIRSRWPATFARVGLDQFGFAPVILSGFFTAMTFMEGKDFNAAKVKWHESFFPTLQANWMLFIPFQILNMGLVPLQYRLLAVNAVNIPWNAFLSLQNAKGRKAEEDPVAISKKE</sequence>
<reference key="1">
    <citation type="journal article" date="2005" name="Science">
        <title>The genome of the basidiomycetous yeast and human pathogen Cryptococcus neoformans.</title>
        <authorList>
            <person name="Loftus B.J."/>
            <person name="Fung E."/>
            <person name="Roncaglia P."/>
            <person name="Rowley D."/>
            <person name="Amedeo P."/>
            <person name="Bruno D."/>
            <person name="Vamathevan J."/>
            <person name="Miranda M."/>
            <person name="Anderson I.J."/>
            <person name="Fraser J.A."/>
            <person name="Allen J.E."/>
            <person name="Bosdet I.E."/>
            <person name="Brent M.R."/>
            <person name="Chiu R."/>
            <person name="Doering T.L."/>
            <person name="Donlin M.J."/>
            <person name="D'Souza C.A."/>
            <person name="Fox D.S."/>
            <person name="Grinberg V."/>
            <person name="Fu J."/>
            <person name="Fukushima M."/>
            <person name="Haas B.J."/>
            <person name="Huang J.C."/>
            <person name="Janbon G."/>
            <person name="Jones S.J.M."/>
            <person name="Koo H.L."/>
            <person name="Krzywinski M.I."/>
            <person name="Kwon-Chung K.J."/>
            <person name="Lengeler K.B."/>
            <person name="Maiti R."/>
            <person name="Marra M.A."/>
            <person name="Marra R.E."/>
            <person name="Mathewson C.A."/>
            <person name="Mitchell T.G."/>
            <person name="Pertea M."/>
            <person name="Riggs F.R."/>
            <person name="Salzberg S.L."/>
            <person name="Schein J.E."/>
            <person name="Shvartsbeyn A."/>
            <person name="Shin H."/>
            <person name="Shumway M."/>
            <person name="Specht C.A."/>
            <person name="Suh B.B."/>
            <person name="Tenney A."/>
            <person name="Utterback T.R."/>
            <person name="Wickes B.L."/>
            <person name="Wortman J.R."/>
            <person name="Wye N.H."/>
            <person name="Kronstad J.W."/>
            <person name="Lodge J.K."/>
            <person name="Heitman J."/>
            <person name="Davis R.W."/>
            <person name="Fraser C.M."/>
            <person name="Hyman R.W."/>
        </authorList>
    </citation>
    <scope>NUCLEOTIDE SEQUENCE [LARGE SCALE GENOMIC DNA]</scope>
    <source>
        <strain>JEC21 / ATCC MYA-565</strain>
    </source>
</reference>
<name>SYM1_CRYNJ</name>
<feature type="chain" id="PRO_0000234410" description="Protein SYM1">
    <location>
        <begin position="1"/>
        <end position="190"/>
    </location>
</feature>
<feature type="transmembrane region" description="Helical" evidence="2">
    <location>
        <begin position="16"/>
        <end position="36"/>
    </location>
</feature>
<feature type="transmembrane region" description="Helical" evidence="2">
    <location>
        <begin position="54"/>
        <end position="74"/>
    </location>
</feature>
<feature type="transmembrane region" description="Helical" evidence="2">
    <location>
        <begin position="91"/>
        <end position="111"/>
    </location>
</feature>
<feature type="transmembrane region" description="Helical" evidence="2">
    <location>
        <begin position="131"/>
        <end position="151"/>
    </location>
</feature>
<evidence type="ECO:0000250" key="1"/>
<evidence type="ECO:0000255" key="2"/>
<evidence type="ECO:0000305" key="3"/>
<organism>
    <name type="scientific">Cryptococcus neoformans var. neoformans serotype D (strain JEC21 / ATCC MYA-565)</name>
    <name type="common">Filobasidiella neoformans</name>
    <dbReference type="NCBI Taxonomy" id="214684"/>
    <lineage>
        <taxon>Eukaryota</taxon>
        <taxon>Fungi</taxon>
        <taxon>Dikarya</taxon>
        <taxon>Basidiomycota</taxon>
        <taxon>Agaricomycotina</taxon>
        <taxon>Tremellomycetes</taxon>
        <taxon>Tremellales</taxon>
        <taxon>Cryptococcaceae</taxon>
        <taxon>Cryptococcus</taxon>
        <taxon>Cryptococcus neoformans species complex</taxon>
    </lineage>
</organism>
<gene>
    <name type="primary">SYM1</name>
    <name type="ordered locus">CNA06860</name>
</gene>
<comment type="function">
    <text evidence="1">May be involved in cellular response to stress. Required to maintain mitochondrial DNA (mtDNA) integrity and stability (By similarity).</text>
</comment>
<comment type="subcellular location">
    <subcellularLocation>
        <location evidence="1">Mitochondrion inner membrane</location>
        <topology evidence="1">Multi-pass membrane protein</topology>
    </subcellularLocation>
</comment>
<comment type="similarity">
    <text evidence="3">Belongs to the peroxisomal membrane protein PXMP2/4 family.</text>
</comment>
<keyword id="KW-0472">Membrane</keyword>
<keyword id="KW-0496">Mitochondrion</keyword>
<keyword id="KW-0999">Mitochondrion inner membrane</keyword>
<keyword id="KW-1185">Reference proteome</keyword>
<keyword id="KW-0812">Transmembrane</keyword>
<keyword id="KW-1133">Transmembrane helix</keyword>
<accession>P0CQ38</accession>
<accession>Q55Z20</accession>
<accession>Q5KND6</accession>